<evidence type="ECO:0000250" key="1"/>
<evidence type="ECO:0000250" key="2">
    <source>
        <dbReference type="UniProtKB" id="P08581"/>
    </source>
</evidence>
<evidence type="ECO:0000250" key="3">
    <source>
        <dbReference type="UniProtKB" id="P16056"/>
    </source>
</evidence>
<evidence type="ECO:0000255" key="4"/>
<evidence type="ECO:0000255" key="5">
    <source>
        <dbReference type="PROSITE-ProRule" id="PRU00159"/>
    </source>
</evidence>
<evidence type="ECO:0000255" key="6">
    <source>
        <dbReference type="PROSITE-ProRule" id="PRU00352"/>
    </source>
</evidence>
<evidence type="ECO:0000255" key="7">
    <source>
        <dbReference type="PROSITE-ProRule" id="PRU10028"/>
    </source>
</evidence>
<protein>
    <recommendedName>
        <fullName>Hepatocyte growth factor receptor</fullName>
        <shortName>HGF receptor</shortName>
        <ecNumber>2.7.10.1</ecNumber>
    </recommendedName>
    <alternativeName>
        <fullName>HGF/SF receptor</fullName>
    </alternativeName>
    <alternativeName>
        <fullName>Proto-oncogene c-Met</fullName>
    </alternativeName>
    <alternativeName>
        <fullName>Scatter factor receptor</fullName>
        <shortName>SF receptor</shortName>
    </alternativeName>
    <alternativeName>
        <fullName>Tyrosine-protein kinase Met</fullName>
    </alternativeName>
</protein>
<keyword id="KW-0067">ATP-binding</keyword>
<keyword id="KW-1015">Disulfide bond</keyword>
<keyword id="KW-0325">Glycoprotein</keyword>
<keyword id="KW-0418">Kinase</keyword>
<keyword id="KW-0472">Membrane</keyword>
<keyword id="KW-0547">Nucleotide-binding</keyword>
<keyword id="KW-0597">Phosphoprotein</keyword>
<keyword id="KW-0656">Proto-oncogene</keyword>
<keyword id="KW-0675">Receptor</keyword>
<keyword id="KW-0677">Repeat</keyword>
<keyword id="KW-0732">Signal</keyword>
<keyword id="KW-0808">Transferase</keyword>
<keyword id="KW-0812">Transmembrane</keyword>
<keyword id="KW-1133">Transmembrane helix</keyword>
<keyword id="KW-0829">Tyrosine-protein kinase</keyword>
<keyword id="KW-0832">Ubl conjugation</keyword>
<sequence>MKAPAVLAPGILVLLFTLVQRSNGECKEALTKSEMNVNMKYQLPNFTAETPIQNVVLHEHHIFLGATNYIYVLNEEDLQKVAEHRTGPVLEHPDCFPCQDCSSKANLSGGVWKDNINMALVVDTYYDDQLISCGSVNRGTCQRHVFPHNHTADIQSDVHCIFSPQIEEPSQCPDCVVSALGTKVLLSVKDRFLNFFVGNTVNSSYFPDHSLHSISVRRLKETKNGFMFLTDQSYVDVLPEFRDSYPIKYVHAFESNNFIYFLTVQRETLNAQTFHTRIIRFCSINSALHSYMEMPLECILTEKRKKRSTKKEVFNILQAAYVSKPGAQLARQIGASLNDDILFGVFAQSKPDSAEPMDRSAVCAFPIKYVNDFFNKIVNKNNVRCLQHFYGPNHEHCFNRTFQRNLLGCEARRDEYRTEFTTALQRIDLFAGQFNKVLLTSISTFVKGDLTIANLGTSEGRFIQIVVSRSVPSTPHVNFLLDSHPVSPEVIVEQPLNQDGYTLVVTGKKITKIPLNGLGCRHFQSCSQCLSAPSFVQCGWCHDKCVRSEECSSGTWTQETCLPAIYKVFPTSAPLEGGTRLTICGWDFGFRRNNKFDLKKTRVLLGNESCTLTSSESTMNTLKCTIGPAMNEHFNMSIIISNSHGTTQYSTFSYVDPIITSISPRYGPMSGGTLLTLTGNYLNSGNSRHISIGGKTCTLKSVSNSILECYTPAQTISTEFPVKLKIDLANRETSIFSYLEDPIVYEIHPTKSFISGGSTITGIGKNLNSVSVPRMVINLHEARRNFTVACQHRSNSEIICCTTPSLQQLNLQLPLKTKAFFMLDGILSKYFDLIYVHNPVFKPFEKPVMISMGNENVLEIKGNDIDPEAVKGEVLKVGNKSCENIHLHSEAVLCTVPSDLLKLNSELNIEWKQAISSTVLGKVIVQPDQNFTGLIAGVVSISIALLLLLAFFLWLKKRKQIKDLGSELVRYDARVHTPHLDRLVSARSVSPTTEMVSNESVDYRATFPEDQFPNSSQNGSCRQVQYPLPDMSPILTSGDSDISSPLLQNTVHIDLSALNPELVQAVQHVVIGPSSLIVHFNEVIGRGHFGCVYHGTLLDNDGKKIHCAVKSLNRITDIGEVSQFLTEGIIMKDFSHPNVLSLLGICLRSEGSPLVVLPYMKHGDLRNFIRNETHNPTVKDLIGFGLQVAKGMKYLASKKFVHRDLAARNCMLDEKFTVKVADFGLARDMYDKEYYSVHNKTGAKLPVKWMALESLQTQKFTTKSDVWSFGVLLWELMTRGAPPYPDVNTFDITVYLLQGRRLLQPEYCPDPLYEVMLKCWHPKAEMRPSFSELVSRISAIFSTFIGEHYVHVNATYVNVKCVAPYPSLLSSQDNADGEVDT</sequence>
<name>MET_PLEMO</name>
<reference key="1">
    <citation type="submission" date="2005-11" db="EMBL/GenBank/DDBJ databases">
        <title>NISC comparative sequencing initiative.</title>
        <authorList>
            <person name="Antonellis A."/>
            <person name="Ayele K."/>
            <person name="Benjamin B."/>
            <person name="Blakesley R.W."/>
            <person name="Boakye A."/>
            <person name="Bouffard G.G."/>
            <person name="Brinkley C."/>
            <person name="Brooks S."/>
            <person name="Chu G."/>
            <person name="Coleman H."/>
            <person name="Engle J."/>
            <person name="Gestole M."/>
            <person name="Greene A."/>
            <person name="Guan X."/>
            <person name="Gupta J."/>
            <person name="Haghighi P."/>
            <person name="Han J."/>
            <person name="Hansen N."/>
            <person name="Ho S.-L."/>
            <person name="Hu P."/>
            <person name="Hunter G."/>
            <person name="Hurle B."/>
            <person name="Idol J.R."/>
            <person name="Kwong P."/>
            <person name="Laric P."/>
            <person name="Larson S."/>
            <person name="Lee-Lin S.-Q."/>
            <person name="Legaspi R."/>
            <person name="Madden M."/>
            <person name="Maduro Q.L."/>
            <person name="Maduro V.B."/>
            <person name="Margulies E.H."/>
            <person name="Masiello C."/>
            <person name="Maskeri B."/>
            <person name="McDowell J."/>
            <person name="Mojidi H.A."/>
            <person name="Mullikin J.C."/>
            <person name="Oestreicher J.S."/>
            <person name="Park M."/>
            <person name="Portnoy M.E."/>
            <person name="Prasad A."/>
            <person name="Puri O."/>
            <person name="Reddix-Dugue N."/>
            <person name="Schandler K."/>
            <person name="Schueler M.G."/>
            <person name="Sison C."/>
            <person name="Stantripop S."/>
            <person name="Stephen E."/>
            <person name="Taye A."/>
            <person name="Thomas J.W."/>
            <person name="Thomas P.J."/>
            <person name="Tsipouri V."/>
            <person name="Ung L."/>
            <person name="Vogt J.L."/>
            <person name="Wetherby K.D."/>
            <person name="Young A."/>
            <person name="Green E.D."/>
        </authorList>
    </citation>
    <scope>NUCLEOTIDE SEQUENCE [LARGE SCALE GENOMIC DNA]</scope>
</reference>
<organism>
    <name type="scientific">Plecturocebus moloch</name>
    <name type="common">Dusky titi monkey</name>
    <name type="synonym">Callicebus moloch</name>
    <dbReference type="NCBI Taxonomy" id="9523"/>
    <lineage>
        <taxon>Eukaryota</taxon>
        <taxon>Metazoa</taxon>
        <taxon>Chordata</taxon>
        <taxon>Craniata</taxon>
        <taxon>Vertebrata</taxon>
        <taxon>Euteleostomi</taxon>
        <taxon>Mammalia</taxon>
        <taxon>Eutheria</taxon>
        <taxon>Euarchontoglires</taxon>
        <taxon>Primates</taxon>
        <taxon>Haplorrhini</taxon>
        <taxon>Platyrrhini</taxon>
        <taxon>Pitheciidae</taxon>
        <taxon>Callicebinae</taxon>
        <taxon>Plecturocebus</taxon>
    </lineage>
</organism>
<gene>
    <name type="primary">MET</name>
</gene>
<comment type="function">
    <text evidence="1">Receptor tyrosine kinase that transduces signals from the extracellular matrix into the cytoplasm by binding to hepatocyte growth factor/HGF ligand. Regulates many physiological processes including proliferation, scattering, morphogenesis and survival. Ligand binding at the cell surface induces autophosphorylation of MET on its intracellular domain that provides docking sites for downstream signaling molecules. Following activation by ligand, interacts with the PI3-kinase subunit PIK3R1, PLCG1, SRC, GRB2, STAT3 or the adapter GAB1. Recruitment of these downstream effectors by MET leads to the activation of several signaling cascades including the RAS-ERK, PI3 kinase-AKT, or PLCgamma-PKC. The RAS-ERK activation is associated with the morphogenetic effects while PI3K/AKT coordinates prosurvival effects. During embryonic development, MET signaling plays a role in gastrulation, development and migration of muscles and neuronal precursors, angiogenesis and kidney formation. In adults, participates in wound healing as well as organ regeneration and tissue remodeling. Also promotes differentiation and proliferation of hematopoietic cells (By similarity).</text>
</comment>
<comment type="catalytic activity">
    <reaction evidence="7">
        <text>L-tyrosyl-[protein] + ATP = O-phospho-L-tyrosyl-[protein] + ADP + H(+)</text>
        <dbReference type="Rhea" id="RHEA:10596"/>
        <dbReference type="Rhea" id="RHEA-COMP:10136"/>
        <dbReference type="Rhea" id="RHEA-COMP:20101"/>
        <dbReference type="ChEBI" id="CHEBI:15378"/>
        <dbReference type="ChEBI" id="CHEBI:30616"/>
        <dbReference type="ChEBI" id="CHEBI:46858"/>
        <dbReference type="ChEBI" id="CHEBI:61978"/>
        <dbReference type="ChEBI" id="CHEBI:456216"/>
        <dbReference type="EC" id="2.7.10.1"/>
    </reaction>
</comment>
<comment type="activity regulation">
    <text evidence="1">In its inactive state, the C-terminal tail interacts with the catalytic domain and inhibits the kinase activity. Upon ligand binding, the C-terminal tail is displaced and becomes phosphorylated, thus increasing the kinase activity (By similarity).</text>
</comment>
<comment type="subunit">
    <text evidence="2 3">Heterodimer made of an alpha chain (50 kDa) and a beta chain (145 kDa) which are disulfide linked. Binds PLXNB1. Interacts when phosphorylated with downstream effectors including STAT3, PIK3R1, SRC, PCLG1, GRB2 and GAB1. Interacts with SPSB1, SPSB2 and SPSB4. Interacts with INPP5D/SHIP1. When phosphorylated at Tyr-1356, interacts with INPPL1/SHIP2. Interacts with RANBP9 and RANBP10, as well as SPSB1, SPSB2, SPSB3 and SPSB4. SPSB1 binding occurs in the presence and in the absence of HGF, however HGF treatment has a positive effect on this interaction. Interacts with MUC20; prevents interaction with GRB2 and suppresses hepatocyte growth factor-induced cell proliferation. Interacts with GRB10. Interacts with PTPN1 and PTPN2. Interacts with HSP90AA1 and HSP90AB1; the interaction suppresses MET kinase activity. Interacts with tensin TNS3 (By similarity). Interacts (when phosphorylated) with tensin TNS4 (via SH2 domain); the interaction increases MET protein stability by inhibiting MET endocytosis and subsequent lysosomal degradation (By similarity).</text>
</comment>
<comment type="subcellular location">
    <subcellularLocation>
        <location evidence="1">Membrane</location>
        <topology evidence="1">Single-pass type I membrane protein</topology>
    </subcellularLocation>
</comment>
<comment type="domain">
    <text evidence="1">The kinase domain is involved in SPSB1 binding.</text>
</comment>
<comment type="domain">
    <text evidence="1">The beta-propeller Sema domain mediates binding to HGF.</text>
</comment>
<comment type="PTM">
    <text evidence="2">Autophosphorylated in response to ligand binding on Tyr-1234 and Tyr-1235 in the kinase domain leading to further phosphorylation of Tyr-1349 and Tyr-1356 in the C-terminal multifunctional docking site. Dephosphorylated by PTPRJ at Tyr-1349 and Tyr-1365. Dephosphorylated by PTPN1 and PTPN2 (By similarity).</text>
</comment>
<comment type="PTM">
    <text evidence="2">Ubiquitinated. Ubiquitination by CBL regulates the receptor stability and activity through proteasomal degradation (By similarity).</text>
</comment>
<comment type="PTM">
    <text evidence="2">O-mannosylation of IPT/TIG domains by TMEM260 is required for protein maturation. O-mannosylated residues are composed of single mannose glycans that are not elongated or modified.</text>
</comment>
<comment type="similarity">
    <text evidence="5">Belongs to the protein kinase superfamily. Tyr protein kinase family.</text>
</comment>
<feature type="signal peptide" evidence="4">
    <location>
        <begin position="1"/>
        <end position="24"/>
    </location>
</feature>
<feature type="chain" id="PRO_0000226360" description="Hepatocyte growth factor receptor">
    <location>
        <begin position="25"/>
        <end position="1381"/>
    </location>
</feature>
<feature type="topological domain" description="Extracellular" evidence="4">
    <location>
        <begin position="25"/>
        <end position="934"/>
    </location>
</feature>
<feature type="transmembrane region" description="Helical" evidence="4">
    <location>
        <begin position="935"/>
        <end position="955"/>
    </location>
</feature>
<feature type="topological domain" description="Cytoplasmic" evidence="4">
    <location>
        <begin position="956"/>
        <end position="1381"/>
    </location>
</feature>
<feature type="domain" description="Sema" evidence="6">
    <location>
        <begin position="27"/>
        <end position="515"/>
    </location>
</feature>
<feature type="domain" description="IPT/TIG 1">
    <location>
        <begin position="563"/>
        <end position="655"/>
    </location>
</feature>
<feature type="domain" description="IPT/TIG 2">
    <location>
        <begin position="657"/>
        <end position="739"/>
    </location>
</feature>
<feature type="domain" description="IPT/TIG 3">
    <location>
        <begin position="742"/>
        <end position="836"/>
    </location>
</feature>
<feature type="domain" description="Protein kinase" evidence="5">
    <location>
        <begin position="1078"/>
        <end position="1345"/>
    </location>
</feature>
<feature type="region of interest" description="Interaction with RANBP9" evidence="1">
    <location>
        <begin position="1212"/>
        <end position="1381"/>
    </location>
</feature>
<feature type="region of interest" description="Interaction with MUC20" evidence="1">
    <location>
        <begin position="1320"/>
        <end position="1359"/>
    </location>
</feature>
<feature type="active site" description="Proton acceptor" evidence="5 7">
    <location>
        <position position="1204"/>
    </location>
</feature>
<feature type="binding site" evidence="5">
    <location>
        <begin position="1084"/>
        <end position="1092"/>
    </location>
    <ligand>
        <name>ATP</name>
        <dbReference type="ChEBI" id="CHEBI:30616"/>
    </ligand>
</feature>
<feature type="binding site" evidence="5">
    <location>
        <position position="1110"/>
    </location>
    <ligand>
        <name>ATP</name>
        <dbReference type="ChEBI" id="CHEBI:30616"/>
    </ligand>
</feature>
<feature type="site" description="Cleavage" evidence="4">
    <location>
        <begin position="307"/>
        <end position="308"/>
    </location>
</feature>
<feature type="modified residue" description="Phosphoserine" evidence="2">
    <location>
        <position position="966"/>
    </location>
</feature>
<feature type="modified residue" description="Phosphothreonine" evidence="2">
    <location>
        <position position="977"/>
    </location>
</feature>
<feature type="modified residue" description="Phosphoserine" evidence="2">
    <location>
        <position position="990"/>
    </location>
</feature>
<feature type="modified residue" description="Phosphoserine" evidence="2">
    <location>
        <position position="997"/>
    </location>
</feature>
<feature type="modified residue" description="Phosphoserine" evidence="2">
    <location>
        <position position="1000"/>
    </location>
</feature>
<feature type="modified residue" description="Phosphotyrosine" evidence="2">
    <location>
        <position position="1003"/>
    </location>
</feature>
<feature type="modified residue" description="Phosphotyrosine" evidence="2">
    <location>
        <position position="1230"/>
    </location>
</feature>
<feature type="modified residue" description="Phosphotyrosine; by autocatalysis" evidence="2">
    <location>
        <position position="1234"/>
    </location>
</feature>
<feature type="modified residue" description="Phosphotyrosine; by autocatalysis" evidence="2">
    <location>
        <position position="1235"/>
    </location>
</feature>
<feature type="modified residue" description="Phosphothreonine" evidence="2">
    <location>
        <position position="1289"/>
    </location>
</feature>
<feature type="modified residue" description="Phosphotyrosine; by autocatalysis" evidence="2">
    <location>
        <position position="1349"/>
    </location>
</feature>
<feature type="modified residue" description="Phosphotyrosine; by autocatalysis" evidence="2">
    <location>
        <position position="1356"/>
    </location>
</feature>
<feature type="modified residue" description="Phosphotyrosine" evidence="2">
    <location>
        <position position="1365"/>
    </location>
</feature>
<feature type="glycosylation site" description="N-linked (GlcNAc...) asparagine" evidence="4">
    <location>
        <position position="45"/>
    </location>
</feature>
<feature type="glycosylation site" description="N-linked (GlcNAc...) asparagine" evidence="4">
    <location>
        <position position="106"/>
    </location>
</feature>
<feature type="glycosylation site" description="N-linked (GlcNAc...) asparagine" evidence="4">
    <location>
        <position position="149"/>
    </location>
</feature>
<feature type="glycosylation site" description="N-linked (GlcNAc...) asparagine" evidence="4">
    <location>
        <position position="202"/>
    </location>
</feature>
<feature type="glycosylation site" description="N-linked (GlcNAc...) asparagine" evidence="4">
    <location>
        <position position="399"/>
    </location>
</feature>
<feature type="glycosylation site" description="O-linked (Man) threonine" evidence="2">
    <location>
        <position position="582"/>
    </location>
</feature>
<feature type="glycosylation site" description="N-linked (GlcNAc...) asparagine" evidence="4">
    <location>
        <position position="607"/>
    </location>
</feature>
<feature type="glycosylation site" description="N-linked (GlcNAc...) asparagine" evidence="4">
    <location>
        <position position="635"/>
    </location>
</feature>
<feature type="glycosylation site" description="O-linked (Man) threonine" evidence="2">
    <location>
        <position position="676"/>
    </location>
</feature>
<feature type="glycosylation site" description="O-linked (Man) threonine" evidence="2">
    <location>
        <position position="761"/>
    </location>
</feature>
<feature type="glycosylation site" description="N-linked (GlcNAc...) asparagine" evidence="4">
    <location>
        <position position="785"/>
    </location>
</feature>
<feature type="glycosylation site" description="N-linked (GlcNAc...) asparagine" evidence="4">
    <location>
        <position position="879"/>
    </location>
</feature>
<feature type="glycosylation site" description="N-linked (GlcNAc...) asparagine" evidence="4">
    <location>
        <position position="930"/>
    </location>
</feature>
<feature type="disulfide bond" evidence="6">
    <location>
        <begin position="95"/>
        <end position="101"/>
    </location>
</feature>
<feature type="disulfide bond" evidence="6">
    <location>
        <begin position="98"/>
        <end position="160"/>
    </location>
</feature>
<feature type="disulfide bond" evidence="6">
    <location>
        <begin position="133"/>
        <end position="141"/>
    </location>
</feature>
<feature type="disulfide bond" evidence="6">
    <location>
        <begin position="172"/>
        <end position="175"/>
    </location>
</feature>
<feature type="disulfide bond" evidence="6">
    <location>
        <begin position="298"/>
        <end position="363"/>
    </location>
</feature>
<feature type="disulfide bond" evidence="6">
    <location>
        <begin position="385"/>
        <end position="397"/>
    </location>
</feature>
<feature type="disulfide bond" evidence="6">
    <location>
        <begin position="520"/>
        <end position="538"/>
    </location>
</feature>
<feature type="disulfide bond" evidence="6">
    <location>
        <begin position="526"/>
        <end position="561"/>
    </location>
</feature>
<feature type="disulfide bond" evidence="6">
    <location>
        <begin position="529"/>
        <end position="545"/>
    </location>
</feature>
<feature type="disulfide bond" evidence="6">
    <location>
        <begin position="541"/>
        <end position="551"/>
    </location>
</feature>
<accession>Q2QLC0</accession>
<dbReference type="EC" id="2.7.10.1"/>
<dbReference type="EMBL" id="DP000019">
    <property type="protein sequence ID" value="ABB89789.1"/>
    <property type="molecule type" value="Genomic_DNA"/>
</dbReference>
<dbReference type="SMR" id="Q2QLC0"/>
<dbReference type="GlyCosmos" id="Q2QLC0">
    <property type="glycosylation" value="10 sites, No reported glycans"/>
</dbReference>
<dbReference type="GO" id="GO:0005886">
    <property type="term" value="C:plasma membrane"/>
    <property type="evidence" value="ECO:0007669"/>
    <property type="project" value="TreeGrafter"/>
</dbReference>
<dbReference type="GO" id="GO:0002116">
    <property type="term" value="C:semaphorin receptor complex"/>
    <property type="evidence" value="ECO:0007669"/>
    <property type="project" value="TreeGrafter"/>
</dbReference>
<dbReference type="GO" id="GO:0005524">
    <property type="term" value="F:ATP binding"/>
    <property type="evidence" value="ECO:0007669"/>
    <property type="project" value="UniProtKB-KW"/>
</dbReference>
<dbReference type="GO" id="GO:0017154">
    <property type="term" value="F:semaphorin receptor activity"/>
    <property type="evidence" value="ECO:0007669"/>
    <property type="project" value="InterPro"/>
</dbReference>
<dbReference type="GO" id="GO:0004714">
    <property type="term" value="F:transmembrane receptor protein tyrosine kinase activity"/>
    <property type="evidence" value="ECO:0007669"/>
    <property type="project" value="UniProtKB-EC"/>
</dbReference>
<dbReference type="GO" id="GO:0007169">
    <property type="term" value="P:cell surface receptor protein tyrosine kinase signaling pathway"/>
    <property type="evidence" value="ECO:0007669"/>
    <property type="project" value="InterPro"/>
</dbReference>
<dbReference type="GO" id="GO:0050918">
    <property type="term" value="P:positive chemotaxis"/>
    <property type="evidence" value="ECO:0000250"/>
    <property type="project" value="UniProtKB"/>
</dbReference>
<dbReference type="GO" id="GO:2001028">
    <property type="term" value="P:positive regulation of endothelial cell chemotaxis"/>
    <property type="evidence" value="ECO:0000250"/>
    <property type="project" value="UniProtKB"/>
</dbReference>
<dbReference type="GO" id="GO:0071526">
    <property type="term" value="P:semaphorin-plexin signaling pathway"/>
    <property type="evidence" value="ECO:0000250"/>
    <property type="project" value="UniProtKB"/>
</dbReference>
<dbReference type="CDD" id="cd00603">
    <property type="entry name" value="IPT_PCSR"/>
    <property type="match status" value="1"/>
</dbReference>
<dbReference type="CDD" id="cd01180">
    <property type="entry name" value="IPT_plexin_repeat1"/>
    <property type="match status" value="1"/>
</dbReference>
<dbReference type="CDD" id="cd01179">
    <property type="entry name" value="IPT_plexin_repeat2"/>
    <property type="match status" value="1"/>
</dbReference>
<dbReference type="CDD" id="cd05058">
    <property type="entry name" value="PTKc_Met_Ron"/>
    <property type="match status" value="1"/>
</dbReference>
<dbReference type="FunFam" id="1.10.510.10:FF:000093">
    <property type="entry name" value="Hepatocyte growth factor receptor"/>
    <property type="match status" value="1"/>
</dbReference>
<dbReference type="FunFam" id="2.130.10.10:FF:000088">
    <property type="entry name" value="Hepatocyte growth factor receptor"/>
    <property type="match status" value="1"/>
</dbReference>
<dbReference type="FunFam" id="2.60.40.10:FF:000213">
    <property type="entry name" value="Hepatocyte growth factor receptor"/>
    <property type="match status" value="1"/>
</dbReference>
<dbReference type="FunFam" id="2.60.40.10:FF:000400">
    <property type="entry name" value="Hepatocyte growth factor receptor"/>
    <property type="match status" value="1"/>
</dbReference>
<dbReference type="FunFam" id="2.60.40.10:FF:002708">
    <property type="entry name" value="Hepatocyte growth factor receptor"/>
    <property type="match status" value="1"/>
</dbReference>
<dbReference type="FunFam" id="3.30.200.20:FF:000188">
    <property type="entry name" value="Hepatocyte growth factor receptor"/>
    <property type="match status" value="1"/>
</dbReference>
<dbReference type="Gene3D" id="2.60.40.10">
    <property type="entry name" value="Immunoglobulins"/>
    <property type="match status" value="3"/>
</dbReference>
<dbReference type="Gene3D" id="3.30.200.20">
    <property type="entry name" value="Phosphorylase Kinase, domain 1"/>
    <property type="match status" value="1"/>
</dbReference>
<dbReference type="Gene3D" id="1.10.510.10">
    <property type="entry name" value="Transferase(Phosphotransferase) domain 1"/>
    <property type="match status" value="1"/>
</dbReference>
<dbReference type="Gene3D" id="2.130.10.10">
    <property type="entry name" value="YVTN repeat-like/Quinoprotein amine dehydrogenase"/>
    <property type="match status" value="1"/>
</dbReference>
<dbReference type="InterPro" id="IPR013783">
    <property type="entry name" value="Ig-like_fold"/>
</dbReference>
<dbReference type="InterPro" id="IPR014756">
    <property type="entry name" value="Ig_E-set"/>
</dbReference>
<dbReference type="InterPro" id="IPR002909">
    <property type="entry name" value="IPT_dom"/>
</dbReference>
<dbReference type="InterPro" id="IPR011009">
    <property type="entry name" value="Kinase-like_dom_sf"/>
</dbReference>
<dbReference type="InterPro" id="IPR031148">
    <property type="entry name" value="Plexin"/>
</dbReference>
<dbReference type="InterPro" id="IPR002165">
    <property type="entry name" value="Plexin_repeat"/>
</dbReference>
<dbReference type="InterPro" id="IPR000719">
    <property type="entry name" value="Prot_kinase_dom"/>
</dbReference>
<dbReference type="InterPro" id="IPR017441">
    <property type="entry name" value="Protein_kinase_ATP_BS"/>
</dbReference>
<dbReference type="InterPro" id="IPR016201">
    <property type="entry name" value="PSI"/>
</dbReference>
<dbReference type="InterPro" id="IPR001627">
    <property type="entry name" value="Semap_dom"/>
</dbReference>
<dbReference type="InterPro" id="IPR036352">
    <property type="entry name" value="Semap_dom_sf"/>
</dbReference>
<dbReference type="InterPro" id="IPR001245">
    <property type="entry name" value="Ser-Thr/Tyr_kinase_cat_dom"/>
</dbReference>
<dbReference type="InterPro" id="IPR008266">
    <property type="entry name" value="Tyr_kinase_AS"/>
</dbReference>
<dbReference type="InterPro" id="IPR020635">
    <property type="entry name" value="Tyr_kinase_cat_dom"/>
</dbReference>
<dbReference type="InterPro" id="IPR016244">
    <property type="entry name" value="Tyr_kinase_HGF/MSP_rcpt"/>
</dbReference>
<dbReference type="InterPro" id="IPR015943">
    <property type="entry name" value="WD40/YVTN_repeat-like_dom_sf"/>
</dbReference>
<dbReference type="PANTHER" id="PTHR22625:SF61">
    <property type="entry name" value="HEPATOCYTE GROWTH FACTOR RECEPTOR"/>
    <property type="match status" value="1"/>
</dbReference>
<dbReference type="PANTHER" id="PTHR22625">
    <property type="entry name" value="PLEXIN"/>
    <property type="match status" value="1"/>
</dbReference>
<dbReference type="Pfam" id="PF07714">
    <property type="entry name" value="PK_Tyr_Ser-Thr"/>
    <property type="match status" value="1"/>
</dbReference>
<dbReference type="Pfam" id="PF01437">
    <property type="entry name" value="PSI"/>
    <property type="match status" value="1"/>
</dbReference>
<dbReference type="Pfam" id="PF01403">
    <property type="entry name" value="Sema"/>
    <property type="match status" value="1"/>
</dbReference>
<dbReference type="Pfam" id="PF01833">
    <property type="entry name" value="TIG"/>
    <property type="match status" value="3"/>
</dbReference>
<dbReference type="PIRSF" id="PIRSF000617">
    <property type="entry name" value="TyrPK_HGF-R"/>
    <property type="match status" value="1"/>
</dbReference>
<dbReference type="PRINTS" id="PR00109">
    <property type="entry name" value="TYRKINASE"/>
</dbReference>
<dbReference type="SMART" id="SM00429">
    <property type="entry name" value="IPT"/>
    <property type="match status" value="4"/>
</dbReference>
<dbReference type="SMART" id="SM00423">
    <property type="entry name" value="PSI"/>
    <property type="match status" value="1"/>
</dbReference>
<dbReference type="SMART" id="SM00630">
    <property type="entry name" value="Sema"/>
    <property type="match status" value="1"/>
</dbReference>
<dbReference type="SMART" id="SM00219">
    <property type="entry name" value="TyrKc"/>
    <property type="match status" value="1"/>
</dbReference>
<dbReference type="SUPFAM" id="SSF81296">
    <property type="entry name" value="E set domains"/>
    <property type="match status" value="3"/>
</dbReference>
<dbReference type="SUPFAM" id="SSF103575">
    <property type="entry name" value="Plexin repeat"/>
    <property type="match status" value="1"/>
</dbReference>
<dbReference type="SUPFAM" id="SSF56112">
    <property type="entry name" value="Protein kinase-like (PK-like)"/>
    <property type="match status" value="1"/>
</dbReference>
<dbReference type="SUPFAM" id="SSF101912">
    <property type="entry name" value="Sema domain"/>
    <property type="match status" value="1"/>
</dbReference>
<dbReference type="PROSITE" id="PS00107">
    <property type="entry name" value="PROTEIN_KINASE_ATP"/>
    <property type="match status" value="1"/>
</dbReference>
<dbReference type="PROSITE" id="PS50011">
    <property type="entry name" value="PROTEIN_KINASE_DOM"/>
    <property type="match status" value="1"/>
</dbReference>
<dbReference type="PROSITE" id="PS00109">
    <property type="entry name" value="PROTEIN_KINASE_TYR"/>
    <property type="match status" value="1"/>
</dbReference>
<dbReference type="PROSITE" id="PS51004">
    <property type="entry name" value="SEMA"/>
    <property type="match status" value="1"/>
</dbReference>
<proteinExistence type="inferred from homology"/>